<comment type="function">
    <text evidence="1">RNaseP catalyzes the removal of the 5'-leader sequence from pre-tRNA to produce the mature 5'-terminus. It can also cleave other RNA substrates such as 4.5S RNA. The protein component plays an auxiliary but essential role in vivo by binding to the 5'-leader sequence and broadening the substrate specificity of the ribozyme.</text>
</comment>
<comment type="catalytic activity">
    <reaction evidence="1">
        <text>Endonucleolytic cleavage of RNA, removing 5'-extranucleotides from tRNA precursor.</text>
        <dbReference type="EC" id="3.1.26.5"/>
    </reaction>
</comment>
<comment type="subunit">
    <text evidence="1">Consists of a catalytic RNA component (M1 or rnpB) and a protein subunit.</text>
</comment>
<comment type="similarity">
    <text evidence="1">Belongs to the RnpA family.</text>
</comment>
<accession>Q4UML0</accession>
<gene>
    <name evidence="1" type="primary">rnpA</name>
    <name type="ordered locus">RF_0347</name>
</gene>
<name>RNPA_RICFE</name>
<keyword id="KW-0255">Endonuclease</keyword>
<keyword id="KW-0378">Hydrolase</keyword>
<keyword id="KW-0540">Nuclease</keyword>
<keyword id="KW-0694">RNA-binding</keyword>
<keyword id="KW-0819">tRNA processing</keyword>
<organism>
    <name type="scientific">Rickettsia felis (strain ATCC VR-1525 / URRWXCal2)</name>
    <name type="common">Rickettsia azadi</name>
    <dbReference type="NCBI Taxonomy" id="315456"/>
    <lineage>
        <taxon>Bacteria</taxon>
        <taxon>Pseudomonadati</taxon>
        <taxon>Pseudomonadota</taxon>
        <taxon>Alphaproteobacteria</taxon>
        <taxon>Rickettsiales</taxon>
        <taxon>Rickettsiaceae</taxon>
        <taxon>Rickettsieae</taxon>
        <taxon>Rickettsia</taxon>
        <taxon>spotted fever group</taxon>
    </lineage>
</organism>
<protein>
    <recommendedName>
        <fullName evidence="1">Ribonuclease P protein component</fullName>
        <shortName evidence="1">RNase P protein</shortName>
        <shortName evidence="1">RNaseP protein</shortName>
        <ecNumber evidence="1">3.1.26.5</ecNumber>
    </recommendedName>
    <alternativeName>
        <fullName evidence="1">Protein C5</fullName>
    </alternativeName>
</protein>
<proteinExistence type="inferred from homology"/>
<reference key="1">
    <citation type="journal article" date="2005" name="PLoS Biol.">
        <title>The genome sequence of Rickettsia felis identifies the first putative conjugative plasmid in an obligate intracellular parasite.</title>
        <authorList>
            <person name="Ogata H."/>
            <person name="Renesto P."/>
            <person name="Audic S."/>
            <person name="Robert C."/>
            <person name="Blanc G."/>
            <person name="Fournier P.-E."/>
            <person name="Parinello H."/>
            <person name="Claverie J.-M."/>
            <person name="Raoult D."/>
        </authorList>
    </citation>
    <scope>NUCLEOTIDE SEQUENCE [LARGE SCALE GENOMIC DNA]</scope>
    <source>
        <strain>ATCC VR-1525 / URRWXCal2</strain>
    </source>
</reference>
<sequence length="118" mass="13993">MSITSLKNQKEFELINKLGKKFHERYFILVIAKKLPKIFLESKYNTFLGIKVSRKLNKKAVVRNKIKRRIRHLIRIIVSDSKLKAIKFAMIIIPRKGFEEINFSHLNCELSKIILRNI</sequence>
<dbReference type="EC" id="3.1.26.5" evidence="1"/>
<dbReference type="EMBL" id="CP000053">
    <property type="protein sequence ID" value="AAY61198.1"/>
    <property type="molecule type" value="Genomic_DNA"/>
</dbReference>
<dbReference type="SMR" id="Q4UML0"/>
<dbReference type="STRING" id="315456.RF_0347"/>
<dbReference type="KEGG" id="rfe:RF_0347"/>
<dbReference type="eggNOG" id="COG0594">
    <property type="taxonomic scope" value="Bacteria"/>
</dbReference>
<dbReference type="HOGENOM" id="CLU_2047938_0_0_5"/>
<dbReference type="OrthoDB" id="7160815at2"/>
<dbReference type="Proteomes" id="UP000008548">
    <property type="component" value="Chromosome"/>
</dbReference>
<dbReference type="GO" id="GO:0030677">
    <property type="term" value="C:ribonuclease P complex"/>
    <property type="evidence" value="ECO:0007669"/>
    <property type="project" value="TreeGrafter"/>
</dbReference>
<dbReference type="GO" id="GO:0042781">
    <property type="term" value="F:3'-tRNA processing endoribonuclease activity"/>
    <property type="evidence" value="ECO:0007669"/>
    <property type="project" value="TreeGrafter"/>
</dbReference>
<dbReference type="GO" id="GO:0004526">
    <property type="term" value="F:ribonuclease P activity"/>
    <property type="evidence" value="ECO:0007669"/>
    <property type="project" value="UniProtKB-UniRule"/>
</dbReference>
<dbReference type="GO" id="GO:0000049">
    <property type="term" value="F:tRNA binding"/>
    <property type="evidence" value="ECO:0007669"/>
    <property type="project" value="UniProtKB-UniRule"/>
</dbReference>
<dbReference type="GO" id="GO:0001682">
    <property type="term" value="P:tRNA 5'-leader removal"/>
    <property type="evidence" value="ECO:0007669"/>
    <property type="project" value="UniProtKB-UniRule"/>
</dbReference>
<dbReference type="Gene3D" id="3.30.230.10">
    <property type="match status" value="1"/>
</dbReference>
<dbReference type="HAMAP" id="MF_00227">
    <property type="entry name" value="RNase_P"/>
    <property type="match status" value="1"/>
</dbReference>
<dbReference type="InterPro" id="IPR020568">
    <property type="entry name" value="Ribosomal_Su5_D2-typ_SF"/>
</dbReference>
<dbReference type="InterPro" id="IPR014721">
    <property type="entry name" value="Ribsml_uS5_D2-typ_fold_subgr"/>
</dbReference>
<dbReference type="InterPro" id="IPR000100">
    <property type="entry name" value="RNase_P"/>
</dbReference>
<dbReference type="InterPro" id="IPR020539">
    <property type="entry name" value="RNase_P_CS"/>
</dbReference>
<dbReference type="NCBIfam" id="TIGR00188">
    <property type="entry name" value="rnpA"/>
    <property type="match status" value="1"/>
</dbReference>
<dbReference type="PANTHER" id="PTHR33992">
    <property type="entry name" value="RIBONUCLEASE P PROTEIN COMPONENT"/>
    <property type="match status" value="1"/>
</dbReference>
<dbReference type="PANTHER" id="PTHR33992:SF1">
    <property type="entry name" value="RIBONUCLEASE P PROTEIN COMPONENT"/>
    <property type="match status" value="1"/>
</dbReference>
<dbReference type="Pfam" id="PF00825">
    <property type="entry name" value="Ribonuclease_P"/>
    <property type="match status" value="1"/>
</dbReference>
<dbReference type="SUPFAM" id="SSF54211">
    <property type="entry name" value="Ribosomal protein S5 domain 2-like"/>
    <property type="match status" value="1"/>
</dbReference>
<dbReference type="PROSITE" id="PS00648">
    <property type="entry name" value="RIBONUCLEASE_P"/>
    <property type="match status" value="1"/>
</dbReference>
<feature type="chain" id="PRO_0000274856" description="Ribonuclease P protein component">
    <location>
        <begin position="1"/>
        <end position="118"/>
    </location>
</feature>
<evidence type="ECO:0000255" key="1">
    <source>
        <dbReference type="HAMAP-Rule" id="MF_00227"/>
    </source>
</evidence>